<protein>
    <recommendedName>
        <fullName evidence="1">Imidazoleglycerol-phosphate dehydratase</fullName>
        <shortName evidence="1">IGPD</shortName>
        <ecNumber evidence="1">4.2.1.19</ecNumber>
    </recommendedName>
</protein>
<name>HIS7_BURP6</name>
<dbReference type="EC" id="4.2.1.19" evidence="1"/>
<dbReference type="EMBL" id="CP000570">
    <property type="protein sequence ID" value="ABN83523.1"/>
    <property type="molecule type" value="Genomic_DNA"/>
</dbReference>
<dbReference type="RefSeq" id="WP_004199911.1">
    <property type="nucleotide sequence ID" value="NC_009074.1"/>
</dbReference>
<dbReference type="SMR" id="A3NE97"/>
<dbReference type="GeneID" id="93061754"/>
<dbReference type="KEGG" id="bpd:BURPS668_3664"/>
<dbReference type="HOGENOM" id="CLU_044308_2_0_4"/>
<dbReference type="UniPathway" id="UPA00031">
    <property type="reaction ID" value="UER00011"/>
</dbReference>
<dbReference type="GO" id="GO:0005737">
    <property type="term" value="C:cytoplasm"/>
    <property type="evidence" value="ECO:0007669"/>
    <property type="project" value="UniProtKB-SubCell"/>
</dbReference>
<dbReference type="GO" id="GO:0004424">
    <property type="term" value="F:imidazoleglycerol-phosphate dehydratase activity"/>
    <property type="evidence" value="ECO:0007669"/>
    <property type="project" value="UniProtKB-UniRule"/>
</dbReference>
<dbReference type="GO" id="GO:0000105">
    <property type="term" value="P:L-histidine biosynthetic process"/>
    <property type="evidence" value="ECO:0007669"/>
    <property type="project" value="UniProtKB-UniRule"/>
</dbReference>
<dbReference type="CDD" id="cd07914">
    <property type="entry name" value="IGPD"/>
    <property type="match status" value="1"/>
</dbReference>
<dbReference type="FunFam" id="3.30.230.40:FF:000002">
    <property type="entry name" value="Imidazoleglycerol-phosphate dehydratase"/>
    <property type="match status" value="1"/>
</dbReference>
<dbReference type="FunFam" id="3.30.230.40:FF:000003">
    <property type="entry name" value="Imidazoleglycerol-phosphate dehydratase HisB"/>
    <property type="match status" value="1"/>
</dbReference>
<dbReference type="Gene3D" id="3.30.230.40">
    <property type="entry name" value="Imidazole glycerol phosphate dehydratase, domain 1"/>
    <property type="match status" value="2"/>
</dbReference>
<dbReference type="HAMAP" id="MF_00076">
    <property type="entry name" value="HisB"/>
    <property type="match status" value="1"/>
</dbReference>
<dbReference type="InterPro" id="IPR038494">
    <property type="entry name" value="IGPD_sf"/>
</dbReference>
<dbReference type="InterPro" id="IPR000807">
    <property type="entry name" value="ImidazoleglycerolP_deHydtase"/>
</dbReference>
<dbReference type="InterPro" id="IPR020565">
    <property type="entry name" value="ImidazoleglycerP_deHydtase_CS"/>
</dbReference>
<dbReference type="InterPro" id="IPR020568">
    <property type="entry name" value="Ribosomal_Su5_D2-typ_SF"/>
</dbReference>
<dbReference type="NCBIfam" id="NF002106">
    <property type="entry name" value="PRK00951.1-1"/>
    <property type="match status" value="1"/>
</dbReference>
<dbReference type="NCBIfam" id="NF002109">
    <property type="entry name" value="PRK00951.1-5"/>
    <property type="match status" value="1"/>
</dbReference>
<dbReference type="NCBIfam" id="NF002111">
    <property type="entry name" value="PRK00951.2-1"/>
    <property type="match status" value="1"/>
</dbReference>
<dbReference type="NCBIfam" id="NF002114">
    <property type="entry name" value="PRK00951.2-4"/>
    <property type="match status" value="1"/>
</dbReference>
<dbReference type="PANTHER" id="PTHR23133:SF2">
    <property type="entry name" value="IMIDAZOLEGLYCEROL-PHOSPHATE DEHYDRATASE"/>
    <property type="match status" value="1"/>
</dbReference>
<dbReference type="PANTHER" id="PTHR23133">
    <property type="entry name" value="IMIDAZOLEGLYCEROL-PHOSPHATE DEHYDRATASE HIS7"/>
    <property type="match status" value="1"/>
</dbReference>
<dbReference type="Pfam" id="PF00475">
    <property type="entry name" value="IGPD"/>
    <property type="match status" value="1"/>
</dbReference>
<dbReference type="SUPFAM" id="SSF54211">
    <property type="entry name" value="Ribosomal protein S5 domain 2-like"/>
    <property type="match status" value="2"/>
</dbReference>
<dbReference type="PROSITE" id="PS00954">
    <property type="entry name" value="IGP_DEHYDRATASE_1"/>
    <property type="match status" value="1"/>
</dbReference>
<dbReference type="PROSITE" id="PS00955">
    <property type="entry name" value="IGP_DEHYDRATASE_2"/>
    <property type="match status" value="1"/>
</dbReference>
<organism>
    <name type="scientific">Burkholderia pseudomallei (strain 668)</name>
    <dbReference type="NCBI Taxonomy" id="320373"/>
    <lineage>
        <taxon>Bacteria</taxon>
        <taxon>Pseudomonadati</taxon>
        <taxon>Pseudomonadota</taxon>
        <taxon>Betaproteobacteria</taxon>
        <taxon>Burkholderiales</taxon>
        <taxon>Burkholderiaceae</taxon>
        <taxon>Burkholderia</taxon>
        <taxon>pseudomallei group</taxon>
    </lineage>
</organism>
<reference key="1">
    <citation type="journal article" date="2010" name="Genome Biol. Evol.">
        <title>Continuing evolution of Burkholderia mallei through genome reduction and large-scale rearrangements.</title>
        <authorList>
            <person name="Losada L."/>
            <person name="Ronning C.M."/>
            <person name="DeShazer D."/>
            <person name="Woods D."/>
            <person name="Fedorova N."/>
            <person name="Kim H.S."/>
            <person name="Shabalina S.A."/>
            <person name="Pearson T.R."/>
            <person name="Brinkac L."/>
            <person name="Tan P."/>
            <person name="Nandi T."/>
            <person name="Crabtree J."/>
            <person name="Badger J."/>
            <person name="Beckstrom-Sternberg S."/>
            <person name="Saqib M."/>
            <person name="Schutzer S.E."/>
            <person name="Keim P."/>
            <person name="Nierman W.C."/>
        </authorList>
    </citation>
    <scope>NUCLEOTIDE SEQUENCE [LARGE SCALE GENOMIC DNA]</scope>
    <source>
        <strain>668</strain>
    </source>
</reference>
<gene>
    <name evidence="1" type="primary">hisB</name>
    <name type="ordered locus">BURPS668_3664</name>
</gene>
<accession>A3NE97</accession>
<proteinExistence type="inferred from homology"/>
<evidence type="ECO:0000255" key="1">
    <source>
        <dbReference type="HAMAP-Rule" id="MF_00076"/>
    </source>
</evidence>
<comment type="catalytic activity">
    <reaction evidence="1">
        <text>D-erythro-1-(imidazol-4-yl)glycerol 3-phosphate = 3-(imidazol-4-yl)-2-oxopropyl phosphate + H2O</text>
        <dbReference type="Rhea" id="RHEA:11040"/>
        <dbReference type="ChEBI" id="CHEBI:15377"/>
        <dbReference type="ChEBI" id="CHEBI:57766"/>
        <dbReference type="ChEBI" id="CHEBI:58278"/>
        <dbReference type="EC" id="4.2.1.19"/>
    </reaction>
</comment>
<comment type="pathway">
    <text evidence="1">Amino-acid biosynthesis; L-histidine biosynthesis; L-histidine from 5-phospho-alpha-D-ribose 1-diphosphate: step 6/9.</text>
</comment>
<comment type="subcellular location">
    <subcellularLocation>
        <location evidence="1">Cytoplasm</location>
    </subcellularLocation>
</comment>
<comment type="similarity">
    <text evidence="1">Belongs to the imidazoleglycerol-phosphate dehydratase family.</text>
</comment>
<feature type="chain" id="PRO_1000010260" description="Imidazoleglycerol-phosphate dehydratase">
    <location>
        <begin position="1"/>
        <end position="195"/>
    </location>
</feature>
<sequence length="195" mass="21476">MRVAQVVRNTSETQISVKIDLDGTGRQKLATGVPFLDHMLDQIARHGLVDLDIEAHGDTHIDDHHTVEDVGITLGQAVAKAVGDRKGIRRYGHSYVPLDEALSRVVIDFSGRPGLEFHVPFTRARIGTFDVDLSIEFFRGFVNHAGVTLHIDNLRGVNAHHQLETVFKAFGRALRMAVELDERAAGQIPSTKGSL</sequence>
<keyword id="KW-0028">Amino-acid biosynthesis</keyword>
<keyword id="KW-0963">Cytoplasm</keyword>
<keyword id="KW-0368">Histidine biosynthesis</keyword>
<keyword id="KW-0456">Lyase</keyword>